<reference key="1">
    <citation type="submission" date="2000-08" db="EMBL/GenBank/DDBJ databases">
        <title>Molecular systematics of the langurs.</title>
        <authorList>
            <person name="Karanth P.K."/>
            <person name="Singh L."/>
            <person name="Stewart C.-B."/>
        </authorList>
    </citation>
    <scope>NUCLEOTIDE SEQUENCE [GENOMIC DNA]</scope>
</reference>
<dbReference type="EMBL" id="AF294861">
    <property type="protein sequence ID" value="AAM68944.1"/>
    <property type="molecule type" value="Genomic_DNA"/>
</dbReference>
<dbReference type="GO" id="GO:0000786">
    <property type="term" value="C:nucleosome"/>
    <property type="evidence" value="ECO:0007669"/>
    <property type="project" value="UniProtKB-KW"/>
</dbReference>
<dbReference type="GO" id="GO:0005634">
    <property type="term" value="C:nucleus"/>
    <property type="evidence" value="ECO:0007669"/>
    <property type="project" value="UniProtKB-SubCell"/>
</dbReference>
<dbReference type="GO" id="GO:0003677">
    <property type="term" value="F:DNA binding"/>
    <property type="evidence" value="ECO:0007669"/>
    <property type="project" value="UniProtKB-KW"/>
</dbReference>
<dbReference type="GO" id="GO:0030261">
    <property type="term" value="P:chromosome condensation"/>
    <property type="evidence" value="ECO:0007669"/>
    <property type="project" value="UniProtKB-KW"/>
</dbReference>
<dbReference type="GO" id="GO:0035092">
    <property type="term" value="P:sperm DNA condensation"/>
    <property type="evidence" value="ECO:0007669"/>
    <property type="project" value="InterPro"/>
</dbReference>
<dbReference type="InterPro" id="IPR000221">
    <property type="entry name" value="Protamine_P1"/>
</dbReference>
<dbReference type="Pfam" id="PF00260">
    <property type="entry name" value="Protamine_P1"/>
    <property type="match status" value="1"/>
</dbReference>
<dbReference type="PROSITE" id="PS00048">
    <property type="entry name" value="PROTAMINE_P1"/>
    <property type="match status" value="1"/>
</dbReference>
<sequence>MARYRCCRSQSRSRCCRPRRRCRRRRRRSCRARRRATRCCRRRYRLRSRRY</sequence>
<evidence type="ECO:0000250" key="1"/>
<evidence type="ECO:0000305" key="2"/>
<name>HSP1_TRACR</name>
<feature type="chain" id="PRO_0000191579" description="Sperm protamine P1">
    <location>
        <begin position="1"/>
        <end position="51"/>
    </location>
</feature>
<protein>
    <recommendedName>
        <fullName>Sperm protamine P1</fullName>
    </recommendedName>
</protein>
<organism>
    <name type="scientific">Trachypithecus cristatus</name>
    <name type="common">Silvered leaf-monkey</name>
    <name type="synonym">Presbytis cristata</name>
    <dbReference type="NCBI Taxonomy" id="122765"/>
    <lineage>
        <taxon>Eukaryota</taxon>
        <taxon>Metazoa</taxon>
        <taxon>Chordata</taxon>
        <taxon>Craniata</taxon>
        <taxon>Vertebrata</taxon>
        <taxon>Euteleostomi</taxon>
        <taxon>Mammalia</taxon>
        <taxon>Eutheria</taxon>
        <taxon>Euarchontoglires</taxon>
        <taxon>Primates</taxon>
        <taxon>Haplorrhini</taxon>
        <taxon>Catarrhini</taxon>
        <taxon>Cercopithecidae</taxon>
        <taxon>Colobinae</taxon>
        <taxon>Trachypithecus</taxon>
    </lineage>
</organism>
<accession>Q9GKQ2</accession>
<proteinExistence type="evidence at transcript level"/>
<keyword id="KW-0158">Chromosome</keyword>
<keyword id="KW-0217">Developmental protein</keyword>
<keyword id="KW-0221">Differentiation</keyword>
<keyword id="KW-0226">DNA condensation</keyword>
<keyword id="KW-0238">DNA-binding</keyword>
<keyword id="KW-0544">Nucleosome core</keyword>
<keyword id="KW-0539">Nucleus</keyword>
<keyword id="KW-0744">Spermatogenesis</keyword>
<comment type="function">
    <text evidence="1">Protamines substitute for histones in the chromatin of sperm during the haploid phase of spermatogenesis. They compact sperm DNA into a highly condensed, stable and inactive complex (By similarity).</text>
</comment>
<comment type="subcellular location">
    <subcellularLocation>
        <location evidence="1">Nucleus</location>
    </subcellularLocation>
    <subcellularLocation>
        <location evidence="1">Chromosome</location>
    </subcellularLocation>
</comment>
<comment type="tissue specificity">
    <text>Testis.</text>
</comment>
<comment type="similarity">
    <text evidence="2">Belongs to the protamine P1 family.</text>
</comment>
<gene>
    <name type="primary">PRM1</name>
</gene>